<name>DEF_SALTY</name>
<gene>
    <name evidence="1" type="primary">def</name>
    <name type="synonym">fms</name>
    <name type="ordered locus">STM3406</name>
</gene>
<comment type="function">
    <text evidence="1">Removes the formyl group from the N-terminal Met of newly synthesized proteins. Requires at least a dipeptide for an efficient rate of reaction. N-terminal L-methionine is a prerequisite for activity but the enzyme has broad specificity at other positions.</text>
</comment>
<comment type="catalytic activity">
    <reaction evidence="1">
        <text>N-terminal N-formyl-L-methionyl-[peptide] + H2O = N-terminal L-methionyl-[peptide] + formate</text>
        <dbReference type="Rhea" id="RHEA:24420"/>
        <dbReference type="Rhea" id="RHEA-COMP:10639"/>
        <dbReference type="Rhea" id="RHEA-COMP:10640"/>
        <dbReference type="ChEBI" id="CHEBI:15377"/>
        <dbReference type="ChEBI" id="CHEBI:15740"/>
        <dbReference type="ChEBI" id="CHEBI:49298"/>
        <dbReference type="ChEBI" id="CHEBI:64731"/>
        <dbReference type="EC" id="3.5.1.88"/>
    </reaction>
</comment>
<comment type="cofactor">
    <cofactor evidence="1">
        <name>Fe(2+)</name>
        <dbReference type="ChEBI" id="CHEBI:29033"/>
    </cofactor>
    <text evidence="1">Binds 1 Fe(2+) ion.</text>
</comment>
<comment type="similarity">
    <text evidence="1">Belongs to the polypeptide deformylase family.</text>
</comment>
<reference key="1">
    <citation type="journal article" date="2001" name="Nature">
        <title>Complete genome sequence of Salmonella enterica serovar Typhimurium LT2.</title>
        <authorList>
            <person name="McClelland M."/>
            <person name="Sanderson K.E."/>
            <person name="Spieth J."/>
            <person name="Clifton S.W."/>
            <person name="Latreille P."/>
            <person name="Courtney L."/>
            <person name="Porwollik S."/>
            <person name="Ali J."/>
            <person name="Dante M."/>
            <person name="Du F."/>
            <person name="Hou S."/>
            <person name="Layman D."/>
            <person name="Leonard S."/>
            <person name="Nguyen C."/>
            <person name="Scott K."/>
            <person name="Holmes A."/>
            <person name="Grewal N."/>
            <person name="Mulvaney E."/>
            <person name="Ryan E."/>
            <person name="Sun H."/>
            <person name="Florea L."/>
            <person name="Miller W."/>
            <person name="Stoneking T."/>
            <person name="Nhan M."/>
            <person name="Waterston R."/>
            <person name="Wilson R.K."/>
        </authorList>
    </citation>
    <scope>NUCLEOTIDE SEQUENCE [LARGE SCALE GENOMIC DNA]</scope>
    <source>
        <strain>LT2 / SGSC1412 / ATCC 700720</strain>
    </source>
</reference>
<proteinExistence type="inferred from homology"/>
<sequence>MSVLQVLHIPDERLRKVAKPVEEVNAEIQRIVDDMFETMYAEEGIGLAATQVDIHQRIIVIDVSENRDERLVLINPELLEKSGETGIEEGCLSIPEQRALVPRAEKVKIRALDRDGNPFELEADGLLAICIQHEMDHLVGKLFIDYLSPLKQQRIRQKVEKLDRLNARA</sequence>
<feature type="chain" id="PRO_0000082833" description="Peptide deformylase">
    <location>
        <begin position="1"/>
        <end position="169"/>
    </location>
</feature>
<feature type="active site" evidence="1">
    <location>
        <position position="134"/>
    </location>
</feature>
<feature type="binding site" evidence="1">
    <location>
        <position position="91"/>
    </location>
    <ligand>
        <name>Fe cation</name>
        <dbReference type="ChEBI" id="CHEBI:24875"/>
    </ligand>
</feature>
<feature type="binding site" evidence="1">
    <location>
        <position position="133"/>
    </location>
    <ligand>
        <name>Fe cation</name>
        <dbReference type="ChEBI" id="CHEBI:24875"/>
    </ligand>
</feature>
<feature type="binding site" evidence="1">
    <location>
        <position position="137"/>
    </location>
    <ligand>
        <name>Fe cation</name>
        <dbReference type="ChEBI" id="CHEBI:24875"/>
    </ligand>
</feature>
<keyword id="KW-0378">Hydrolase</keyword>
<keyword id="KW-0408">Iron</keyword>
<keyword id="KW-0479">Metal-binding</keyword>
<keyword id="KW-0648">Protein biosynthesis</keyword>
<keyword id="KW-1185">Reference proteome</keyword>
<accession>Q8ZLM7</accession>
<evidence type="ECO:0000255" key="1">
    <source>
        <dbReference type="HAMAP-Rule" id="MF_00163"/>
    </source>
</evidence>
<protein>
    <recommendedName>
        <fullName evidence="1">Peptide deformylase</fullName>
        <shortName evidence="1">PDF</shortName>
        <ecNumber evidence="1">3.5.1.88</ecNumber>
    </recommendedName>
    <alternativeName>
        <fullName evidence="1">Polypeptide deformylase</fullName>
    </alternativeName>
</protein>
<dbReference type="EC" id="3.5.1.88" evidence="1"/>
<dbReference type="EMBL" id="AE006468">
    <property type="protein sequence ID" value="AAL22269.1"/>
    <property type="molecule type" value="Genomic_DNA"/>
</dbReference>
<dbReference type="RefSeq" id="NP_462310.1">
    <property type="nucleotide sequence ID" value="NC_003197.2"/>
</dbReference>
<dbReference type="RefSeq" id="WP_000114987.1">
    <property type="nucleotide sequence ID" value="NC_003197.2"/>
</dbReference>
<dbReference type="SMR" id="Q8ZLM7"/>
<dbReference type="STRING" id="99287.STM3406"/>
<dbReference type="PaxDb" id="99287-STM3406"/>
<dbReference type="GeneID" id="1254929"/>
<dbReference type="KEGG" id="stm:STM3406"/>
<dbReference type="PATRIC" id="fig|99287.12.peg.3604"/>
<dbReference type="HOGENOM" id="CLU_061901_2_1_6"/>
<dbReference type="OMA" id="VCIQHEI"/>
<dbReference type="PhylomeDB" id="Q8ZLM7"/>
<dbReference type="BioCyc" id="SENT99287:STM3406-MONOMER"/>
<dbReference type="BRENDA" id="3.5.1.88">
    <property type="organism ID" value="5542"/>
</dbReference>
<dbReference type="Proteomes" id="UP000001014">
    <property type="component" value="Chromosome"/>
</dbReference>
<dbReference type="GO" id="GO:0046872">
    <property type="term" value="F:metal ion binding"/>
    <property type="evidence" value="ECO:0007669"/>
    <property type="project" value="UniProtKB-KW"/>
</dbReference>
<dbReference type="GO" id="GO:0042586">
    <property type="term" value="F:peptide deformylase activity"/>
    <property type="evidence" value="ECO:0000318"/>
    <property type="project" value="GO_Central"/>
</dbReference>
<dbReference type="GO" id="GO:0043686">
    <property type="term" value="P:co-translational protein modification"/>
    <property type="evidence" value="ECO:0000318"/>
    <property type="project" value="GO_Central"/>
</dbReference>
<dbReference type="GO" id="GO:0006412">
    <property type="term" value="P:translation"/>
    <property type="evidence" value="ECO:0007669"/>
    <property type="project" value="UniProtKB-UniRule"/>
</dbReference>
<dbReference type="CDD" id="cd00487">
    <property type="entry name" value="Pep_deformylase"/>
    <property type="match status" value="1"/>
</dbReference>
<dbReference type="FunFam" id="3.90.45.10:FF:000001">
    <property type="entry name" value="Peptide deformylase"/>
    <property type="match status" value="1"/>
</dbReference>
<dbReference type="Gene3D" id="3.90.45.10">
    <property type="entry name" value="Peptide deformylase"/>
    <property type="match status" value="1"/>
</dbReference>
<dbReference type="HAMAP" id="MF_00163">
    <property type="entry name" value="Pep_deformylase"/>
    <property type="match status" value="1"/>
</dbReference>
<dbReference type="InterPro" id="IPR023635">
    <property type="entry name" value="Peptide_deformylase"/>
</dbReference>
<dbReference type="InterPro" id="IPR036821">
    <property type="entry name" value="Peptide_deformylase_sf"/>
</dbReference>
<dbReference type="NCBIfam" id="TIGR00079">
    <property type="entry name" value="pept_deformyl"/>
    <property type="match status" value="1"/>
</dbReference>
<dbReference type="NCBIfam" id="NF001159">
    <property type="entry name" value="PRK00150.1-3"/>
    <property type="match status" value="1"/>
</dbReference>
<dbReference type="PANTHER" id="PTHR10458">
    <property type="entry name" value="PEPTIDE DEFORMYLASE"/>
    <property type="match status" value="1"/>
</dbReference>
<dbReference type="PANTHER" id="PTHR10458:SF21">
    <property type="entry name" value="PEPTIDE DEFORMYLASE"/>
    <property type="match status" value="1"/>
</dbReference>
<dbReference type="Pfam" id="PF01327">
    <property type="entry name" value="Pep_deformylase"/>
    <property type="match status" value="1"/>
</dbReference>
<dbReference type="PIRSF" id="PIRSF004749">
    <property type="entry name" value="Pep_def"/>
    <property type="match status" value="1"/>
</dbReference>
<dbReference type="PRINTS" id="PR01576">
    <property type="entry name" value="PDEFORMYLASE"/>
</dbReference>
<dbReference type="SUPFAM" id="SSF56420">
    <property type="entry name" value="Peptide deformylase"/>
    <property type="match status" value="1"/>
</dbReference>
<organism>
    <name type="scientific">Salmonella typhimurium (strain LT2 / SGSC1412 / ATCC 700720)</name>
    <dbReference type="NCBI Taxonomy" id="99287"/>
    <lineage>
        <taxon>Bacteria</taxon>
        <taxon>Pseudomonadati</taxon>
        <taxon>Pseudomonadota</taxon>
        <taxon>Gammaproteobacteria</taxon>
        <taxon>Enterobacterales</taxon>
        <taxon>Enterobacteriaceae</taxon>
        <taxon>Salmonella</taxon>
    </lineage>
</organism>